<gene>
    <name evidence="1" type="primary">leuA</name>
    <name type="ordered locus">BLi02958</name>
    <name type="ordered locus">BL00611</name>
</gene>
<name>LEU1_BACLD</name>
<dbReference type="EC" id="2.3.3.13" evidence="1"/>
<dbReference type="EMBL" id="CP000002">
    <property type="protein sequence ID" value="AAU24464.1"/>
    <property type="molecule type" value="Genomic_DNA"/>
</dbReference>
<dbReference type="EMBL" id="AE017333">
    <property type="protein sequence ID" value="AAU41826.1"/>
    <property type="molecule type" value="Genomic_DNA"/>
</dbReference>
<dbReference type="RefSeq" id="WP_003184093.1">
    <property type="nucleotide sequence ID" value="NC_006322.1"/>
</dbReference>
<dbReference type="SMR" id="Q65GI8"/>
<dbReference type="STRING" id="279010.BL00611"/>
<dbReference type="KEGG" id="bld:BLi02958"/>
<dbReference type="KEGG" id="bli:BL00611"/>
<dbReference type="PATRIC" id="fig|279010.13.peg.3018"/>
<dbReference type="eggNOG" id="COG0119">
    <property type="taxonomic scope" value="Bacteria"/>
</dbReference>
<dbReference type="HOGENOM" id="CLU_022158_0_1_9"/>
<dbReference type="UniPathway" id="UPA00048">
    <property type="reaction ID" value="UER00070"/>
</dbReference>
<dbReference type="Proteomes" id="UP000000606">
    <property type="component" value="Chromosome"/>
</dbReference>
<dbReference type="GO" id="GO:0005737">
    <property type="term" value="C:cytoplasm"/>
    <property type="evidence" value="ECO:0007669"/>
    <property type="project" value="UniProtKB-SubCell"/>
</dbReference>
<dbReference type="GO" id="GO:0003852">
    <property type="term" value="F:2-isopropylmalate synthase activity"/>
    <property type="evidence" value="ECO:0007669"/>
    <property type="project" value="UniProtKB-UniRule"/>
</dbReference>
<dbReference type="GO" id="GO:0003985">
    <property type="term" value="F:acetyl-CoA C-acetyltransferase activity"/>
    <property type="evidence" value="ECO:0007669"/>
    <property type="project" value="UniProtKB-UniRule"/>
</dbReference>
<dbReference type="GO" id="GO:0030145">
    <property type="term" value="F:manganese ion binding"/>
    <property type="evidence" value="ECO:0007669"/>
    <property type="project" value="UniProtKB-UniRule"/>
</dbReference>
<dbReference type="GO" id="GO:0009098">
    <property type="term" value="P:L-leucine biosynthetic process"/>
    <property type="evidence" value="ECO:0007669"/>
    <property type="project" value="UniProtKB-UniRule"/>
</dbReference>
<dbReference type="CDD" id="cd07940">
    <property type="entry name" value="DRE_TIM_IPMS"/>
    <property type="match status" value="1"/>
</dbReference>
<dbReference type="FunFam" id="1.10.238.260:FF:000001">
    <property type="entry name" value="2-isopropylmalate synthase"/>
    <property type="match status" value="1"/>
</dbReference>
<dbReference type="FunFam" id="3.20.20.70:FF:000010">
    <property type="entry name" value="2-isopropylmalate synthase"/>
    <property type="match status" value="1"/>
</dbReference>
<dbReference type="FunFam" id="3.30.160.270:FF:000003">
    <property type="entry name" value="2-isopropylmalate synthase"/>
    <property type="match status" value="1"/>
</dbReference>
<dbReference type="Gene3D" id="1.10.238.260">
    <property type="match status" value="1"/>
</dbReference>
<dbReference type="Gene3D" id="3.30.160.270">
    <property type="match status" value="1"/>
</dbReference>
<dbReference type="Gene3D" id="3.20.20.70">
    <property type="entry name" value="Aldolase class I"/>
    <property type="match status" value="1"/>
</dbReference>
<dbReference type="HAMAP" id="MF_01025">
    <property type="entry name" value="LeuA_type1"/>
    <property type="match status" value="1"/>
</dbReference>
<dbReference type="InterPro" id="IPR050073">
    <property type="entry name" value="2-IPM_HCS-like"/>
</dbReference>
<dbReference type="InterPro" id="IPR013709">
    <property type="entry name" value="2-isopropylmalate_synth_dimer"/>
</dbReference>
<dbReference type="InterPro" id="IPR002034">
    <property type="entry name" value="AIPM/Hcit_synth_CS"/>
</dbReference>
<dbReference type="InterPro" id="IPR013785">
    <property type="entry name" value="Aldolase_TIM"/>
</dbReference>
<dbReference type="InterPro" id="IPR054691">
    <property type="entry name" value="LeuA/HCS_post-cat"/>
</dbReference>
<dbReference type="InterPro" id="IPR036230">
    <property type="entry name" value="LeuA_allosteric_dom_sf"/>
</dbReference>
<dbReference type="InterPro" id="IPR005671">
    <property type="entry name" value="LeuA_bact_synth"/>
</dbReference>
<dbReference type="InterPro" id="IPR000891">
    <property type="entry name" value="PYR_CT"/>
</dbReference>
<dbReference type="NCBIfam" id="TIGR00973">
    <property type="entry name" value="leuA_bact"/>
    <property type="match status" value="1"/>
</dbReference>
<dbReference type="NCBIfam" id="NF002086">
    <property type="entry name" value="PRK00915.1-3"/>
    <property type="match status" value="1"/>
</dbReference>
<dbReference type="NCBIfam" id="NF002088">
    <property type="entry name" value="PRK00915.1-5"/>
    <property type="match status" value="1"/>
</dbReference>
<dbReference type="PANTHER" id="PTHR10277:SF9">
    <property type="entry name" value="2-ISOPROPYLMALATE SYNTHASE 1, CHLOROPLASTIC-RELATED"/>
    <property type="match status" value="1"/>
</dbReference>
<dbReference type="PANTHER" id="PTHR10277">
    <property type="entry name" value="HOMOCITRATE SYNTHASE-RELATED"/>
    <property type="match status" value="1"/>
</dbReference>
<dbReference type="Pfam" id="PF22617">
    <property type="entry name" value="HCS_D2"/>
    <property type="match status" value="1"/>
</dbReference>
<dbReference type="Pfam" id="PF00682">
    <property type="entry name" value="HMGL-like"/>
    <property type="match status" value="1"/>
</dbReference>
<dbReference type="Pfam" id="PF08502">
    <property type="entry name" value="LeuA_dimer"/>
    <property type="match status" value="1"/>
</dbReference>
<dbReference type="SMART" id="SM00917">
    <property type="entry name" value="LeuA_dimer"/>
    <property type="match status" value="1"/>
</dbReference>
<dbReference type="SUPFAM" id="SSF110921">
    <property type="entry name" value="2-isopropylmalate synthase LeuA, allosteric (dimerisation) domain"/>
    <property type="match status" value="1"/>
</dbReference>
<dbReference type="SUPFAM" id="SSF51569">
    <property type="entry name" value="Aldolase"/>
    <property type="match status" value="1"/>
</dbReference>
<dbReference type="PROSITE" id="PS00815">
    <property type="entry name" value="AIPM_HOMOCIT_SYNTH_1"/>
    <property type="match status" value="1"/>
</dbReference>
<dbReference type="PROSITE" id="PS00816">
    <property type="entry name" value="AIPM_HOMOCIT_SYNTH_2"/>
    <property type="match status" value="1"/>
</dbReference>
<dbReference type="PROSITE" id="PS50991">
    <property type="entry name" value="PYR_CT"/>
    <property type="match status" value="1"/>
</dbReference>
<reference key="1">
    <citation type="journal article" date="2004" name="J. Mol. Microbiol. Biotechnol.">
        <title>The complete genome sequence of Bacillus licheniformis DSM13, an organism with great industrial potential.</title>
        <authorList>
            <person name="Veith B."/>
            <person name="Herzberg C."/>
            <person name="Steckel S."/>
            <person name="Feesche J."/>
            <person name="Maurer K.H."/>
            <person name="Ehrenreich P."/>
            <person name="Baeumer S."/>
            <person name="Henne A."/>
            <person name="Liesegang H."/>
            <person name="Merkl R."/>
            <person name="Ehrenreich A."/>
            <person name="Gottschalk G."/>
        </authorList>
    </citation>
    <scope>NUCLEOTIDE SEQUENCE [LARGE SCALE GENOMIC DNA]</scope>
    <source>
        <strain>ATCC 14580 / DSM 13 / JCM 2505 / CCUG 7422 / NBRC 12200 / NCIMB 9375 / NCTC 10341 / NRRL NRS-1264 / Gibson 46</strain>
    </source>
</reference>
<reference key="2">
    <citation type="journal article" date="2004" name="Genome Biol.">
        <title>Complete genome sequence of the industrial bacterium Bacillus licheniformis and comparisons with closely related Bacillus species.</title>
        <authorList>
            <person name="Rey M.W."/>
            <person name="Ramaiya P."/>
            <person name="Nelson B.A."/>
            <person name="Brody-Karpin S.D."/>
            <person name="Zaretsky E.J."/>
            <person name="Tang M."/>
            <person name="Lopez de Leon A."/>
            <person name="Xiang H."/>
            <person name="Gusti V."/>
            <person name="Clausen I.G."/>
            <person name="Olsen P.B."/>
            <person name="Rasmussen M.D."/>
            <person name="Andersen J.T."/>
            <person name="Joergensen P.L."/>
            <person name="Larsen T.S."/>
            <person name="Sorokin A."/>
            <person name="Bolotin A."/>
            <person name="Lapidus A."/>
            <person name="Galleron N."/>
            <person name="Ehrlich S.D."/>
            <person name="Berka R.M."/>
        </authorList>
    </citation>
    <scope>NUCLEOTIDE SEQUENCE [LARGE SCALE GENOMIC DNA]</scope>
    <source>
        <strain>ATCC 14580 / DSM 13 / JCM 2505 / CCUG 7422 / NBRC 12200 / NCIMB 9375 / NCTC 10341 / NRRL NRS-1264 / Gibson 46</strain>
    </source>
</reference>
<proteinExistence type="inferred from homology"/>
<sequence length="518" mass="56860">MRKINFFDTTLRDGEQSPGVNLNTQEKLAIAQQLEKLGVNIMEAGFPASSPGDFNAVKEIARTIKNCSVTGLARSVKGDIDSAWEALKDGAEPRLHIFIATSDIHLKYKLKKTREQVLEQAVAMVKYAKERFPIVQWSAEDACRTDLPFLAEIVSEVIAAGADVVNLPDTVGYLAPAEYGNIFRYIKENARNADKVQLSAHCHDDLGMAVANSLAAIENGADQVESVINGIGERAGNASLEEIAVALHIRKDFYQAESTIQLNEIKRTSDLVSKLTGMAVPRNKAVVGDNAFAHESGIHQDGFLKEKTTYEIISPELVGVKTDALVLGKHSGRHAFKDKLQNLGFQLGEEEINKFFNIFKELTGKKKEFTDEDLISLILEEKTADRKIGYDFISLQVHYGTSQVPTATVSLKDQETDQVIQEAATGAGSVEAVYNTLKRCMDKEVQLLDYRIQSNRKGQDAFAQVYVRVMIDGKESGGRGVAQDVLEASAKAYLNAVNRYLVLKTNTEGLSKQAAVGS</sequence>
<accession>Q65GI8</accession>
<accession>Q62RZ6</accession>
<evidence type="ECO:0000255" key="1">
    <source>
        <dbReference type="HAMAP-Rule" id="MF_01025"/>
    </source>
</evidence>
<feature type="chain" id="PRO_1000149136" description="2-isopropylmalate synthase">
    <location>
        <begin position="1"/>
        <end position="518"/>
    </location>
</feature>
<feature type="domain" description="Pyruvate carboxyltransferase" evidence="1">
    <location>
        <begin position="4"/>
        <end position="266"/>
    </location>
</feature>
<feature type="region of interest" description="Regulatory domain" evidence="1">
    <location>
        <begin position="391"/>
        <end position="518"/>
    </location>
</feature>
<feature type="binding site" evidence="1">
    <location>
        <position position="13"/>
    </location>
    <ligand>
        <name>Mn(2+)</name>
        <dbReference type="ChEBI" id="CHEBI:29035"/>
    </ligand>
</feature>
<feature type="binding site" evidence="1">
    <location>
        <position position="201"/>
    </location>
    <ligand>
        <name>Mn(2+)</name>
        <dbReference type="ChEBI" id="CHEBI:29035"/>
    </ligand>
</feature>
<feature type="binding site" evidence="1">
    <location>
        <position position="203"/>
    </location>
    <ligand>
        <name>Mn(2+)</name>
        <dbReference type="ChEBI" id="CHEBI:29035"/>
    </ligand>
</feature>
<feature type="binding site" evidence="1">
    <location>
        <position position="237"/>
    </location>
    <ligand>
        <name>Mn(2+)</name>
        <dbReference type="ChEBI" id="CHEBI:29035"/>
    </ligand>
</feature>
<comment type="function">
    <text evidence="1">Catalyzes the condensation of the acetyl group of acetyl-CoA with 3-methyl-2-oxobutanoate (2-ketoisovalerate) to form 3-carboxy-3-hydroxy-4-methylpentanoate (2-isopropylmalate).</text>
</comment>
<comment type="catalytic activity">
    <reaction evidence="1">
        <text>3-methyl-2-oxobutanoate + acetyl-CoA + H2O = (2S)-2-isopropylmalate + CoA + H(+)</text>
        <dbReference type="Rhea" id="RHEA:21524"/>
        <dbReference type="ChEBI" id="CHEBI:1178"/>
        <dbReference type="ChEBI" id="CHEBI:11851"/>
        <dbReference type="ChEBI" id="CHEBI:15377"/>
        <dbReference type="ChEBI" id="CHEBI:15378"/>
        <dbReference type="ChEBI" id="CHEBI:57287"/>
        <dbReference type="ChEBI" id="CHEBI:57288"/>
        <dbReference type="EC" id="2.3.3.13"/>
    </reaction>
</comment>
<comment type="cofactor">
    <cofactor evidence="1">
        <name>Mn(2+)</name>
        <dbReference type="ChEBI" id="CHEBI:29035"/>
    </cofactor>
</comment>
<comment type="pathway">
    <text evidence="1">Amino-acid biosynthesis; L-leucine biosynthesis; L-leucine from 3-methyl-2-oxobutanoate: step 1/4.</text>
</comment>
<comment type="subunit">
    <text evidence="1">Homodimer.</text>
</comment>
<comment type="subcellular location">
    <subcellularLocation>
        <location evidence="1">Cytoplasm</location>
    </subcellularLocation>
</comment>
<comment type="similarity">
    <text evidence="1">Belongs to the alpha-IPM synthase/homocitrate synthase family. LeuA type 1 subfamily.</text>
</comment>
<organism>
    <name type="scientific">Bacillus licheniformis (strain ATCC 14580 / DSM 13 / JCM 2505 / CCUG 7422 / NBRC 12200 / NCIMB 9375 / NCTC 10341 / NRRL NRS-1264 / Gibson 46)</name>
    <dbReference type="NCBI Taxonomy" id="279010"/>
    <lineage>
        <taxon>Bacteria</taxon>
        <taxon>Bacillati</taxon>
        <taxon>Bacillota</taxon>
        <taxon>Bacilli</taxon>
        <taxon>Bacillales</taxon>
        <taxon>Bacillaceae</taxon>
        <taxon>Bacillus</taxon>
    </lineage>
</organism>
<keyword id="KW-0028">Amino-acid biosynthesis</keyword>
<keyword id="KW-0100">Branched-chain amino acid biosynthesis</keyword>
<keyword id="KW-0963">Cytoplasm</keyword>
<keyword id="KW-0432">Leucine biosynthesis</keyword>
<keyword id="KW-0464">Manganese</keyword>
<keyword id="KW-0479">Metal-binding</keyword>
<keyword id="KW-1185">Reference proteome</keyword>
<keyword id="KW-0808">Transferase</keyword>
<protein>
    <recommendedName>
        <fullName evidence="1">2-isopropylmalate synthase</fullName>
        <ecNumber evidence="1">2.3.3.13</ecNumber>
    </recommendedName>
    <alternativeName>
        <fullName evidence="1">Alpha-IPM synthase</fullName>
    </alternativeName>
    <alternativeName>
        <fullName evidence="1">Alpha-isopropylmalate synthase</fullName>
    </alternativeName>
</protein>